<evidence type="ECO:0000255" key="1">
    <source>
        <dbReference type="HAMAP-Rule" id="MF_01380"/>
    </source>
</evidence>
<name>ERPA_ECO24</name>
<proteinExistence type="inferred from homology"/>
<protein>
    <recommendedName>
        <fullName evidence="1">Iron-sulfur cluster insertion protein ErpA</fullName>
    </recommendedName>
</protein>
<reference key="1">
    <citation type="journal article" date="2008" name="J. Bacteriol.">
        <title>The pangenome structure of Escherichia coli: comparative genomic analysis of E. coli commensal and pathogenic isolates.</title>
        <authorList>
            <person name="Rasko D.A."/>
            <person name="Rosovitz M.J."/>
            <person name="Myers G.S.A."/>
            <person name="Mongodin E.F."/>
            <person name="Fricke W.F."/>
            <person name="Gajer P."/>
            <person name="Crabtree J."/>
            <person name="Sebaihia M."/>
            <person name="Thomson N.R."/>
            <person name="Chaudhuri R."/>
            <person name="Henderson I.R."/>
            <person name="Sperandio V."/>
            <person name="Ravel J."/>
        </authorList>
    </citation>
    <scope>NUCLEOTIDE SEQUENCE [LARGE SCALE GENOMIC DNA]</scope>
    <source>
        <strain>E24377A / ETEC</strain>
    </source>
</reference>
<organism>
    <name type="scientific">Escherichia coli O139:H28 (strain E24377A / ETEC)</name>
    <dbReference type="NCBI Taxonomy" id="331111"/>
    <lineage>
        <taxon>Bacteria</taxon>
        <taxon>Pseudomonadati</taxon>
        <taxon>Pseudomonadota</taxon>
        <taxon>Gammaproteobacteria</taxon>
        <taxon>Enterobacterales</taxon>
        <taxon>Enterobacteriaceae</taxon>
        <taxon>Escherichia</taxon>
    </lineage>
</organism>
<gene>
    <name evidence="1" type="primary">erpA</name>
    <name type="ordered locus">EcE24377A_0161</name>
</gene>
<dbReference type="EMBL" id="CP000800">
    <property type="protein sequence ID" value="ABV18013.1"/>
    <property type="molecule type" value="Genomic_DNA"/>
</dbReference>
<dbReference type="RefSeq" id="WP_001295564.1">
    <property type="nucleotide sequence ID" value="NC_009801.1"/>
</dbReference>
<dbReference type="SMR" id="A7ZHP8"/>
<dbReference type="GeneID" id="93777270"/>
<dbReference type="KEGG" id="ecw:EcE24377A_0161"/>
<dbReference type="HOGENOM" id="CLU_069054_5_3_6"/>
<dbReference type="Proteomes" id="UP000001122">
    <property type="component" value="Chromosome"/>
</dbReference>
<dbReference type="GO" id="GO:0005829">
    <property type="term" value="C:cytosol"/>
    <property type="evidence" value="ECO:0007669"/>
    <property type="project" value="TreeGrafter"/>
</dbReference>
<dbReference type="GO" id="GO:0051537">
    <property type="term" value="F:2 iron, 2 sulfur cluster binding"/>
    <property type="evidence" value="ECO:0007669"/>
    <property type="project" value="TreeGrafter"/>
</dbReference>
<dbReference type="GO" id="GO:0051539">
    <property type="term" value="F:4 iron, 4 sulfur cluster binding"/>
    <property type="evidence" value="ECO:0007669"/>
    <property type="project" value="TreeGrafter"/>
</dbReference>
<dbReference type="GO" id="GO:0005506">
    <property type="term" value="F:iron ion binding"/>
    <property type="evidence" value="ECO:0007669"/>
    <property type="project" value="UniProtKB-UniRule"/>
</dbReference>
<dbReference type="GO" id="GO:0016226">
    <property type="term" value="P:iron-sulfur cluster assembly"/>
    <property type="evidence" value="ECO:0007669"/>
    <property type="project" value="UniProtKB-UniRule"/>
</dbReference>
<dbReference type="FunFam" id="2.60.300.12:FF:000002">
    <property type="entry name" value="Iron-sulfur cluster insertion protein ErpA"/>
    <property type="match status" value="1"/>
</dbReference>
<dbReference type="Gene3D" id="2.60.300.12">
    <property type="entry name" value="HesB-like domain"/>
    <property type="match status" value="1"/>
</dbReference>
<dbReference type="HAMAP" id="MF_01380">
    <property type="entry name" value="Fe_S_insert_ErpA"/>
    <property type="match status" value="1"/>
</dbReference>
<dbReference type="InterPro" id="IPR000361">
    <property type="entry name" value="FeS_biogenesis"/>
</dbReference>
<dbReference type="InterPro" id="IPR016092">
    <property type="entry name" value="FeS_cluster_insertion"/>
</dbReference>
<dbReference type="InterPro" id="IPR017870">
    <property type="entry name" value="FeS_cluster_insertion_CS"/>
</dbReference>
<dbReference type="InterPro" id="IPR023063">
    <property type="entry name" value="FeS_cluster_insertion_RrpA"/>
</dbReference>
<dbReference type="InterPro" id="IPR035903">
    <property type="entry name" value="HesB-like_dom_sf"/>
</dbReference>
<dbReference type="NCBIfam" id="TIGR00049">
    <property type="entry name" value="iron-sulfur cluster assembly accessory protein"/>
    <property type="match status" value="1"/>
</dbReference>
<dbReference type="NCBIfam" id="NF010147">
    <property type="entry name" value="PRK13623.1"/>
    <property type="match status" value="1"/>
</dbReference>
<dbReference type="PANTHER" id="PTHR43011">
    <property type="entry name" value="IRON-SULFUR CLUSTER ASSEMBLY 2 HOMOLOG, MITOCHONDRIAL"/>
    <property type="match status" value="1"/>
</dbReference>
<dbReference type="PANTHER" id="PTHR43011:SF1">
    <property type="entry name" value="IRON-SULFUR CLUSTER ASSEMBLY 2 HOMOLOG, MITOCHONDRIAL"/>
    <property type="match status" value="1"/>
</dbReference>
<dbReference type="Pfam" id="PF01521">
    <property type="entry name" value="Fe-S_biosyn"/>
    <property type="match status" value="1"/>
</dbReference>
<dbReference type="SUPFAM" id="SSF89360">
    <property type="entry name" value="HesB-like domain"/>
    <property type="match status" value="1"/>
</dbReference>
<dbReference type="PROSITE" id="PS01152">
    <property type="entry name" value="HESB"/>
    <property type="match status" value="1"/>
</dbReference>
<accession>A7ZHP8</accession>
<sequence>MSDDVALPLEFTDAAANKVKSLIADEDNPNLKLRVYITGGGCSGFQYGFTFDDQVNEGDMTIEKQGVGLVVDPMSLQYLVGGSVDYTEGLEGSRFIVTNPNAKSTCGCGSSFSI</sequence>
<keyword id="KW-0408">Iron</keyword>
<keyword id="KW-0411">Iron-sulfur</keyword>
<keyword id="KW-0479">Metal-binding</keyword>
<keyword id="KW-1185">Reference proteome</keyword>
<feature type="chain" id="PRO_1000144906" description="Iron-sulfur cluster insertion protein ErpA">
    <location>
        <begin position="1"/>
        <end position="114"/>
    </location>
</feature>
<feature type="binding site" evidence="1">
    <location>
        <position position="42"/>
    </location>
    <ligand>
        <name>iron-sulfur cluster</name>
        <dbReference type="ChEBI" id="CHEBI:30408"/>
    </ligand>
</feature>
<feature type="binding site" evidence="1">
    <location>
        <position position="106"/>
    </location>
    <ligand>
        <name>iron-sulfur cluster</name>
        <dbReference type="ChEBI" id="CHEBI:30408"/>
    </ligand>
</feature>
<feature type="binding site" evidence="1">
    <location>
        <position position="108"/>
    </location>
    <ligand>
        <name>iron-sulfur cluster</name>
        <dbReference type="ChEBI" id="CHEBI:30408"/>
    </ligand>
</feature>
<comment type="function">
    <text evidence="1">Required for insertion of 4Fe-4S clusters for at least IspG.</text>
</comment>
<comment type="cofactor">
    <cofactor evidence="1">
        <name>iron-sulfur cluster</name>
        <dbReference type="ChEBI" id="CHEBI:30408"/>
    </cofactor>
    <text evidence="1">Binds 1 iron-sulfur cluster per subunit.</text>
</comment>
<comment type="subunit">
    <text evidence="1">Homodimer.</text>
</comment>
<comment type="similarity">
    <text evidence="1">Belongs to the HesB/IscA family.</text>
</comment>